<protein>
    <recommendedName>
        <fullName>Outer envelope pore protein 37, chloroplastic</fullName>
    </recommendedName>
    <alternativeName>
        <fullName>Chloroplastic outer envelope pore protein of 37 kDa</fullName>
        <shortName>PsOEP37</shortName>
    </alternativeName>
</protein>
<accession>Q4LDF9</accession>
<gene>
    <name type="primary">OEP37</name>
</gene>
<dbReference type="EMBL" id="AJ243759">
    <property type="protein sequence ID" value="CAB50915.1"/>
    <property type="molecule type" value="mRNA"/>
</dbReference>
<dbReference type="TCDB" id="1.B.47.1.1">
    <property type="family name" value="the plastid outer envelope porin of 37 kda (oep37) family"/>
</dbReference>
<dbReference type="OrthoDB" id="2011802at2759"/>
<dbReference type="GO" id="GO:0009707">
    <property type="term" value="C:chloroplast outer membrane"/>
    <property type="evidence" value="ECO:0000250"/>
    <property type="project" value="UniProtKB"/>
</dbReference>
<dbReference type="GO" id="GO:0046930">
    <property type="term" value="C:pore complex"/>
    <property type="evidence" value="ECO:0007669"/>
    <property type="project" value="UniProtKB-KW"/>
</dbReference>
<dbReference type="GO" id="GO:0042802">
    <property type="term" value="F:identical protein binding"/>
    <property type="evidence" value="ECO:0000314"/>
    <property type="project" value="UniProtKB"/>
</dbReference>
<dbReference type="GO" id="GO:0005216">
    <property type="term" value="F:monoatomic ion channel activity"/>
    <property type="evidence" value="ECO:0000314"/>
    <property type="project" value="UniProtKB"/>
</dbReference>
<dbReference type="GO" id="GO:0015288">
    <property type="term" value="F:porin activity"/>
    <property type="evidence" value="ECO:0007669"/>
    <property type="project" value="UniProtKB-KW"/>
</dbReference>
<dbReference type="GO" id="GO:0006812">
    <property type="term" value="P:monoatomic cation transport"/>
    <property type="evidence" value="ECO:0000314"/>
    <property type="project" value="UniProtKB"/>
</dbReference>
<dbReference type="InterPro" id="IPR038951">
    <property type="entry name" value="OEP37-like"/>
</dbReference>
<dbReference type="PANTHER" id="PTHR35484">
    <property type="entry name" value="OUTER ENVELOPE PORE PROTEIN 37, CHLOROPLASTIC"/>
    <property type="match status" value="1"/>
</dbReference>
<dbReference type="PANTHER" id="PTHR35484:SF2">
    <property type="entry name" value="OUTER ENVELOPE PORE PROTEIN 37, CHLOROPLASTIC"/>
    <property type="match status" value="1"/>
</dbReference>
<organism>
    <name type="scientific">Pisum sativum</name>
    <name type="common">Garden pea</name>
    <name type="synonym">Lathyrus oleraceus</name>
    <dbReference type="NCBI Taxonomy" id="3888"/>
    <lineage>
        <taxon>Eukaryota</taxon>
        <taxon>Viridiplantae</taxon>
        <taxon>Streptophyta</taxon>
        <taxon>Embryophyta</taxon>
        <taxon>Tracheophyta</taxon>
        <taxon>Spermatophyta</taxon>
        <taxon>Magnoliopsida</taxon>
        <taxon>eudicotyledons</taxon>
        <taxon>Gunneridae</taxon>
        <taxon>Pentapetalae</taxon>
        <taxon>rosids</taxon>
        <taxon>fabids</taxon>
        <taxon>Fabales</taxon>
        <taxon>Fabaceae</taxon>
        <taxon>Papilionoideae</taxon>
        <taxon>50 kb inversion clade</taxon>
        <taxon>NPAAA clade</taxon>
        <taxon>Hologalegina</taxon>
        <taxon>IRL clade</taxon>
        <taxon>Fabeae</taxon>
        <taxon>Pisum</taxon>
    </lineage>
</organism>
<comment type="function">
    <text evidence="4">Voltage-dependent peptide-sensitive high conductance rectifying cation channel with a strong affinity for TIC32 that is imported into the chloroplast. Conductance is pH-dependent decreasing with decreasing pH values.</text>
</comment>
<comment type="subunit">
    <text evidence="4">Forms an hourglass-shaped multimeric complex.</text>
</comment>
<comment type="subcellular location">
    <subcellularLocation>
        <location evidence="1">Plastid</location>
        <location evidence="1">Chloroplast outer membrane</location>
        <topology evidence="1">Multi-pass membrane protein</topology>
    </subcellularLocation>
</comment>
<comment type="similarity">
    <text evidence="5">Belongs to the plastid outer envelope porin OEP37 (TC 1.B.47) family.</text>
</comment>
<keyword id="KW-0150">Chloroplast</keyword>
<keyword id="KW-0406">Ion transport</keyword>
<keyword id="KW-0472">Membrane</keyword>
<keyword id="KW-0934">Plastid</keyword>
<keyword id="KW-1002">Plastid outer membrane</keyword>
<keyword id="KW-0626">Porin</keyword>
<keyword id="KW-0809">Transit peptide</keyword>
<keyword id="KW-0812">Transmembrane</keyword>
<keyword id="KW-1134">Transmembrane beta strand</keyword>
<keyword id="KW-0813">Transport</keyword>
<feature type="transit peptide" description="Chloroplast" evidence="2">
    <location>
        <begin position="1"/>
        <end position="57"/>
    </location>
</feature>
<feature type="chain" id="PRO_0000415712" description="Outer envelope pore protein 37, chloroplastic">
    <location>
        <begin position="58"/>
        <end position="329"/>
    </location>
</feature>
<feature type="topological domain" description="Cytoplasmic">
    <location>
        <begin position="58"/>
        <end position="60"/>
    </location>
</feature>
<feature type="transmembrane region" description="Beta stranded; Name=1" evidence="2">
    <location>
        <begin position="61"/>
        <end position="70"/>
    </location>
</feature>
<feature type="topological domain" description="Chloroplast intermembrane">
    <location>
        <begin position="71"/>
        <end position="87"/>
    </location>
</feature>
<feature type="transmembrane region" description="Beta stranded; Name=2" evidence="2">
    <location>
        <begin position="88"/>
        <end position="97"/>
    </location>
</feature>
<feature type="topological domain" description="Cytoplasmic">
    <location>
        <begin position="98"/>
        <end position="113"/>
    </location>
</feature>
<feature type="transmembrane region" description="Beta stranded; Name=3" evidence="2">
    <location>
        <begin position="114"/>
        <end position="121"/>
    </location>
</feature>
<feature type="topological domain" description="Chloroplast intermembrane">
    <location>
        <begin position="122"/>
        <end position="138"/>
    </location>
</feature>
<feature type="transmembrane region" description="Beta stranded; Name=4" evidence="2">
    <location>
        <begin position="139"/>
        <end position="148"/>
    </location>
</feature>
<feature type="topological domain" description="Cytoplasmic">
    <location>
        <begin position="149"/>
        <end position="154"/>
    </location>
</feature>
<feature type="transmembrane region" description="Beta stranded; Name=5" evidence="2">
    <location>
        <begin position="155"/>
        <end position="163"/>
    </location>
</feature>
<feature type="topological domain" description="Chloroplast intermembrane">
    <location>
        <begin position="164"/>
        <end position="205"/>
    </location>
</feature>
<feature type="transmembrane region" description="Beta stranded; Name=6" evidence="2">
    <location>
        <begin position="206"/>
        <end position="214"/>
    </location>
</feature>
<feature type="topological domain" description="Cytoplasmic">
    <location>
        <begin position="215"/>
        <end position="216"/>
    </location>
</feature>
<feature type="transmembrane region" description="Beta stranded; Name=7" evidence="2">
    <location>
        <begin position="217"/>
        <end position="226"/>
    </location>
</feature>
<feature type="topological domain" description="Chloroplast intermembrane">
    <location>
        <position position="227"/>
    </location>
</feature>
<feature type="transmembrane region" description="Beta stranded; Name=8" evidence="2">
    <location>
        <begin position="228"/>
        <end position="236"/>
    </location>
</feature>
<feature type="topological domain" description="Cytoplasmic">
    <location>
        <begin position="237"/>
        <end position="243"/>
    </location>
</feature>
<feature type="transmembrane region" description="Beta stranded; Name=9" evidence="2">
    <location>
        <begin position="244"/>
        <end position="253"/>
    </location>
</feature>
<feature type="topological domain" description="Chloroplast intermembrane">
    <location>
        <begin position="254"/>
        <end position="255"/>
    </location>
</feature>
<feature type="transmembrane region" description="Beta stranded; Name=10" evidence="2">
    <location>
        <begin position="256"/>
        <end position="265"/>
    </location>
</feature>
<feature type="topological domain" description="Cytoplasmic">
    <location>
        <begin position="266"/>
        <end position="272"/>
    </location>
</feature>
<feature type="transmembrane region" description="Beta stranded; Name=11" evidence="2">
    <location>
        <begin position="273"/>
        <end position="282"/>
    </location>
</feature>
<feature type="topological domain" description="Chloroplast intermembrane">
    <location>
        <begin position="283"/>
        <end position="302"/>
    </location>
</feature>
<feature type="transmembrane region" description="Beta stranded; Name=12" evidence="2">
    <location>
        <begin position="303"/>
        <end position="312"/>
    </location>
</feature>
<feature type="topological domain" description="Cytoplasmic">
    <location>
        <begin position="313"/>
        <end position="329"/>
    </location>
</feature>
<feature type="region of interest" description="Disordered" evidence="3">
    <location>
        <begin position="1"/>
        <end position="29"/>
    </location>
</feature>
<feature type="compositionally biased region" description="Polar residues" evidence="3">
    <location>
        <begin position="1"/>
        <end position="10"/>
    </location>
</feature>
<evidence type="ECO:0000250" key="1"/>
<evidence type="ECO:0000255" key="2"/>
<evidence type="ECO:0000256" key="3">
    <source>
        <dbReference type="SAM" id="MobiDB-lite"/>
    </source>
</evidence>
<evidence type="ECO:0000269" key="4">
    <source>
    </source>
</evidence>
<evidence type="ECO:0000305" key="5"/>
<name>OEP37_PEA</name>
<sequence length="329" mass="37362">MDSATRNPNYSPEVDPQPLPSTNPIHSRPIFSFPKRPALRITTEFDSESTVFFHKISCKFLDSLAKLKFAFHNNSKGEIAEPQISFVSKYLSLHYDLEDHSALVKSSVDVGPKLKLIGTHDVKAQQGEVTMVANLDDPGYALQLSTPLPSIALPKATFKFPQGEISLQEINDHDEDEQVKNSLSVSGTLKGQLLKGLCTAQYKDQEFKLRYRYKDDEMSFLPILSLPSNALSFAFKRRFGPSDKLSYWYNCDSNYWSAVYKHTYGEDFKFKAGYDSEVRLGWASLWVGDEGGKAKTAPMKMKVQFMLQVPQDDIKSSVLMFRVKKRWDI</sequence>
<reference key="1">
    <citation type="submission" date="1999-07" db="EMBL/GenBank/DDBJ databases">
        <authorList>
            <person name="Stahl T."/>
        </authorList>
    </citation>
    <scope>NUCLEOTIDE SEQUENCE [MRNA]</scope>
    <source>
        <strain>cv. Golf</strain>
        <tissue>Leaf</tissue>
    </source>
</reference>
<reference key="2">
    <citation type="journal article" date="2006" name="J. Biol. Chem.">
        <title>OEP37 is a new member of the chloroplast outer membrane ion channels.</title>
        <authorList>
            <person name="Goetze T.A."/>
            <person name="Philippar K."/>
            <person name="Ilkavets I."/>
            <person name="Soll J."/>
            <person name="Wagner R."/>
        </authorList>
    </citation>
    <scope>FUNCTION</scope>
    <scope>SUBUNIT</scope>
</reference>
<proteinExistence type="evidence at protein level"/>